<protein>
    <recommendedName>
        <fullName>External core antigen</fullName>
    </recommendedName>
    <alternativeName>
        <fullName>HBeAg</fullName>
    </alternativeName>
    <alternativeName>
        <fullName>Precore protein</fullName>
    </alternativeName>
</protein>
<feature type="signal peptide" evidence="2">
    <location>
        <begin position="1"/>
        <end position="19"/>
    </location>
</feature>
<feature type="chain" id="PRO_0000222303" description="External core antigen">
    <location>
        <begin position="20"/>
        <end position="272"/>
    </location>
</feature>
<feature type="propeptide" id="PRO_0000324684" evidence="1">
    <location>
        <begin position="273"/>
        <end position="305"/>
    </location>
</feature>
<feature type="region of interest" description="Disordered" evidence="3">
    <location>
        <begin position="226"/>
        <end position="305"/>
    </location>
</feature>
<feature type="compositionally biased region" description="Basic residues" evidence="3">
    <location>
        <begin position="258"/>
        <end position="277"/>
    </location>
</feature>
<feature type="compositionally biased region" description="Basic residues" evidence="3">
    <location>
        <begin position="295"/>
        <end position="305"/>
    </location>
</feature>
<feature type="site" description="Cleavage; by host" evidence="1">
    <location>
        <begin position="272"/>
        <end position="273"/>
    </location>
</feature>
<name>HBEAG_HPBDC</name>
<dbReference type="EMBL" id="M21953">
    <property type="protein sequence ID" value="AAA45744.1"/>
    <property type="molecule type" value="Genomic_DNA"/>
</dbReference>
<dbReference type="SMR" id="P30027"/>
<dbReference type="Proteomes" id="UP000008119">
    <property type="component" value="Genome"/>
</dbReference>
<dbReference type="GO" id="GO:0005576">
    <property type="term" value="C:extracellular region"/>
    <property type="evidence" value="ECO:0007669"/>
    <property type="project" value="UniProtKB-SubCell"/>
</dbReference>
<dbReference type="GO" id="GO:0005198">
    <property type="term" value="F:structural molecule activity"/>
    <property type="evidence" value="ECO:0007669"/>
    <property type="project" value="InterPro"/>
</dbReference>
<dbReference type="Gene3D" id="1.10.4090.10">
    <property type="entry name" value="Viral capsid, core domain supefamily, Hepatitis B virus"/>
    <property type="match status" value="2"/>
</dbReference>
<dbReference type="InterPro" id="IPR002006">
    <property type="entry name" value="Hepatitis_core"/>
</dbReference>
<dbReference type="InterPro" id="IPR036459">
    <property type="entry name" value="Viral_capsid_core_dom_sf_HBV"/>
</dbReference>
<dbReference type="Pfam" id="PF00906">
    <property type="entry name" value="Hepatitis_core"/>
    <property type="match status" value="1"/>
</dbReference>
<dbReference type="SUPFAM" id="SSF47852">
    <property type="entry name" value="Hepatitis B viral capsid (hbcag)"/>
    <property type="match status" value="1"/>
</dbReference>
<accession>P30027</accession>
<accession>E2QBU6</accession>
<proteinExistence type="inferred from homology"/>
<organism>
    <name type="scientific">Duck hepatitis B virus (strain China)</name>
    <name type="common">DHBV</name>
    <dbReference type="NCBI Taxonomy" id="31510"/>
    <lineage>
        <taxon>Viruses</taxon>
        <taxon>Riboviria</taxon>
        <taxon>Pararnavirae</taxon>
        <taxon>Artverviricota</taxon>
        <taxon>Revtraviricetes</taxon>
        <taxon>Blubervirales</taxon>
        <taxon>Hepadnaviridae</taxon>
        <taxon>Avihepadnavirus</taxon>
        <taxon>Duck hepatitis B virus</taxon>
    </lineage>
</organism>
<keyword id="KW-0024">Alternative initiation</keyword>
<keyword id="KW-0945">Host-virus interaction</keyword>
<keyword id="KW-0964">Secreted</keyword>
<keyword id="KW-0732">Signal</keyword>
<keyword id="KW-0899">Viral immunoevasion</keyword>
<sequence>MWNLRITPLSFGAACQGIFTSTLLLSSLTVPLVCTIVYDSCLYMDINASRALANVYDLPDDFFPKIDDLVRDAKDALEPYWKSDSIKKHVLIATHFVDLIEDFWQTTQGMHEIAESLRAVIPPTTAPVPTGYLIQHEEAEEIPLGDLFKHQEERIVSFQPDYPITARIHAHLKAYAKINEESLDRARRLLWWHYNCLLWGEANVTNYISRLRTWLSTPEKYRGRDAPTIEAITRPIQVAQGGRKTSSGTRKPRGLEPRRRKVKTTVVYGRRRSKSRERRAPSPQRAGSPLPRSSSSHHRSPSPRK</sequence>
<evidence type="ECO:0000250" key="1"/>
<evidence type="ECO:0000255" key="2"/>
<evidence type="ECO:0000256" key="3">
    <source>
        <dbReference type="SAM" id="MobiDB-lite"/>
    </source>
</evidence>
<evidence type="ECO:0000305" key="4"/>
<organismHost>
    <name type="scientific">Anas</name>
    <name type="common">ducks</name>
    <dbReference type="NCBI Taxonomy" id="8835"/>
</organismHost>
<reference key="1">
    <citation type="journal article" date="1990" name="Nucleic Acids Res.">
        <title>Complete nucleotide sequence of a Chinese duck hepatitis B virus.</title>
        <authorList>
            <person name="Tong S."/>
            <person name="Mattes F."/>
            <person name="Teubner K."/>
            <person name="Blum H.E."/>
        </authorList>
    </citation>
    <scope>NUCLEOTIDE SEQUENCE [LARGE SCALE GENOMIC DNA]</scope>
</reference>
<comment type="function">
    <text evidence="1">May regulate immune response to the intracellular capsid in acting as a T-cell tolerogen, by having an immunoregulatory effect which prevents destruction of infected cells by cytotoxic T-cells.</text>
</comment>
<comment type="subunit">
    <text evidence="1">Homodimerizes.</text>
</comment>
<comment type="subcellular location">
    <subcellularLocation>
        <location evidence="1">Secreted</location>
    </subcellularLocation>
</comment>
<comment type="alternative products">
    <event type="alternative initiation"/>
    <isoform>
        <id>P30027-1</id>
        <name>External core antigen</name>
        <sequence type="displayed"/>
    </isoform>
    <isoform>
        <id>P0C6K1-1</id>
        <name>Capsid protein</name>
        <sequence type="external"/>
    </isoform>
</comment>
<comment type="similarity">
    <text evidence="4">Belongs to the avihepadnavirus precore antigen family.</text>
</comment>
<gene>
    <name type="primary">C</name>
</gene>